<organism>
    <name type="scientific">Caulobacter vibrioides (strain ATCC 19089 / CIP 103742 / CB 15)</name>
    <name type="common">Caulobacter crescentus</name>
    <dbReference type="NCBI Taxonomy" id="190650"/>
    <lineage>
        <taxon>Bacteria</taxon>
        <taxon>Pseudomonadati</taxon>
        <taxon>Pseudomonadota</taxon>
        <taxon>Alphaproteobacteria</taxon>
        <taxon>Caulobacterales</taxon>
        <taxon>Caulobacteraceae</taxon>
        <taxon>Caulobacter</taxon>
    </lineage>
</organism>
<sequence>MPSNGIVRSWRRAMATMNVSLPDAMREWVEGQTQSGRYHNASEYVRDLIRRDQERADKIAHLQRLIDEGLDSGVGERSLHEIRAEARRRAGVDHEL</sequence>
<feature type="chain" id="PRO_0000408378" description="Antitoxin ParD4">
    <location>
        <begin position="1"/>
        <end position="96"/>
    </location>
</feature>
<reference key="1">
    <citation type="journal article" date="2001" name="Proc. Natl. Acad. Sci. U.S.A.">
        <title>Complete genome sequence of Caulobacter crescentus.</title>
        <authorList>
            <person name="Nierman W.C."/>
            <person name="Feldblyum T.V."/>
            <person name="Laub M.T."/>
            <person name="Paulsen I.T."/>
            <person name="Nelson K.E."/>
            <person name="Eisen J.A."/>
            <person name="Heidelberg J.F."/>
            <person name="Alley M.R.K."/>
            <person name="Ohta N."/>
            <person name="Maddock J.R."/>
            <person name="Potocka I."/>
            <person name="Nelson W.C."/>
            <person name="Newton A."/>
            <person name="Stephens C."/>
            <person name="Phadke N.D."/>
            <person name="Ely B."/>
            <person name="DeBoy R.T."/>
            <person name="Dodson R.J."/>
            <person name="Durkin A.S."/>
            <person name="Gwinn M.L."/>
            <person name="Haft D.H."/>
            <person name="Kolonay J.F."/>
            <person name="Smit J."/>
            <person name="Craven M.B."/>
            <person name="Khouri H.M."/>
            <person name="Shetty J."/>
            <person name="Berry K.J."/>
            <person name="Utterback T.R."/>
            <person name="Tran K."/>
            <person name="Wolf A.M."/>
            <person name="Vamathevan J.J."/>
            <person name="Ermolaeva M.D."/>
            <person name="White O."/>
            <person name="Salzberg S.L."/>
            <person name="Venter J.C."/>
            <person name="Shapiro L."/>
            <person name="Fraser C.M."/>
        </authorList>
    </citation>
    <scope>NUCLEOTIDE SEQUENCE [LARGE SCALE GENOMIC DNA]</scope>
    <source>
        <strain>ATCC 19089 / CIP 103742 / CB 15</strain>
    </source>
</reference>
<reference key="2">
    <citation type="journal article" date="2005" name="Nucleic Acids Res.">
        <title>Toxin-antitoxin loci are highly abundant in free-living but lost from host-associated prokaryotes.</title>
        <authorList>
            <person name="Pandey D.P."/>
            <person name="Gerdes K."/>
        </authorList>
    </citation>
    <scope>POSSIBLE FUNCTION</scope>
    <source>
        <strain>ATCC 19089 / CIP 103742 / CB 15</strain>
    </source>
</reference>
<reference key="3">
    <citation type="journal article" date="2010" name="Mol. Microbiol.">
        <title>Interaction specificity, toxicity and regulation of a paralogous set of ParE/RelE-family toxin-antitoxin systems.</title>
        <authorList>
            <person name="Fiebig A."/>
            <person name="Castro Rojas C.M."/>
            <person name="Siegal-Gaskins D."/>
            <person name="Crosson S."/>
        </authorList>
    </citation>
    <scope>FUNCTION AS AN ANTITOXIN</scope>
    <scope>DISRUPTION PHENOTYPE</scope>
    <source>
        <strain>ATCC 19089 / CIP 103742 / CB 15</strain>
    </source>
</reference>
<gene>
    <name type="primary">parD4</name>
    <name type="ordered locus">CC_2985</name>
</gene>
<protein>
    <recommendedName>
        <fullName>Antitoxin ParD4</fullName>
    </recommendedName>
</protein>
<accession>Q9A458</accession>
<evidence type="ECO:0000269" key="1">
    <source>
    </source>
</evidence>
<evidence type="ECO:0000305" key="2"/>
<proteinExistence type="evidence at protein level"/>
<comment type="function">
    <text evidence="1">Antitoxin component of a type II toxin-antitoxin (TA) system. Neutralizes the effect of cognate toxin ParE4, but no other RelE or ParE toxin.</text>
</comment>
<comment type="disruption phenotype">
    <text evidence="1">Cannot be disrupted, suggesting it is a functional antitoxin. No visible phenotype when the parDE4 operon is deleted.</text>
</comment>
<comment type="similarity">
    <text evidence="2">Belongs to the ParD antitoxin family.</text>
</comment>
<keyword id="KW-1185">Reference proteome</keyword>
<keyword id="KW-1277">Toxin-antitoxin system</keyword>
<dbReference type="EMBL" id="AE005673">
    <property type="protein sequence ID" value="AAK24947.1"/>
    <property type="molecule type" value="Genomic_DNA"/>
</dbReference>
<dbReference type="PIR" id="G87618">
    <property type="entry name" value="G87618"/>
</dbReference>
<dbReference type="RefSeq" id="NP_421779.1">
    <property type="nucleotide sequence ID" value="NC_002696.2"/>
</dbReference>
<dbReference type="SMR" id="Q9A458"/>
<dbReference type="STRING" id="190650.CC_2985"/>
<dbReference type="EnsemblBacteria" id="AAK24947">
    <property type="protein sequence ID" value="AAK24947"/>
    <property type="gene ID" value="CC_2985"/>
</dbReference>
<dbReference type="KEGG" id="ccr:CC_2985"/>
<dbReference type="PATRIC" id="fig|190650.5.peg.2991"/>
<dbReference type="eggNOG" id="COG3609">
    <property type="taxonomic scope" value="Bacteria"/>
</dbReference>
<dbReference type="HOGENOM" id="CLU_144805_3_1_5"/>
<dbReference type="BioCyc" id="CAULO:CC2985-MONOMER"/>
<dbReference type="Proteomes" id="UP000001816">
    <property type="component" value="Chromosome"/>
</dbReference>
<dbReference type="GO" id="GO:0006355">
    <property type="term" value="P:regulation of DNA-templated transcription"/>
    <property type="evidence" value="ECO:0007669"/>
    <property type="project" value="InterPro"/>
</dbReference>
<dbReference type="CDD" id="cd22231">
    <property type="entry name" value="RHH_NikR_HicB-like"/>
    <property type="match status" value="1"/>
</dbReference>
<dbReference type="Gene3D" id="6.10.10.120">
    <property type="entry name" value="Antitoxin ParD1-like"/>
    <property type="match status" value="1"/>
</dbReference>
<dbReference type="InterPro" id="IPR022789">
    <property type="entry name" value="ParD"/>
</dbReference>
<dbReference type="InterPro" id="IPR038296">
    <property type="entry name" value="ParD_sf"/>
</dbReference>
<dbReference type="InterPro" id="IPR010985">
    <property type="entry name" value="Ribbon_hlx_hlx"/>
</dbReference>
<dbReference type="NCBIfam" id="TIGR02606">
    <property type="entry name" value="antidote_CC2985"/>
    <property type="match status" value="1"/>
</dbReference>
<dbReference type="PANTHER" id="PTHR36582">
    <property type="entry name" value="ANTITOXIN PARD"/>
    <property type="match status" value="1"/>
</dbReference>
<dbReference type="PANTHER" id="PTHR36582:SF2">
    <property type="entry name" value="ANTITOXIN PARD"/>
    <property type="match status" value="1"/>
</dbReference>
<dbReference type="Pfam" id="PF03693">
    <property type="entry name" value="ParD_antitoxin"/>
    <property type="match status" value="1"/>
</dbReference>
<dbReference type="SUPFAM" id="SSF47598">
    <property type="entry name" value="Ribbon-helix-helix"/>
    <property type="match status" value="1"/>
</dbReference>
<name>PARD4_CAUVC</name>